<gene>
    <name evidence="1" type="primary">der</name>
    <name type="synonym">engA</name>
    <name type="ordered locus">Rsph17029_1356</name>
</gene>
<evidence type="ECO:0000255" key="1">
    <source>
        <dbReference type="HAMAP-Rule" id="MF_00195"/>
    </source>
</evidence>
<evidence type="ECO:0000256" key="2">
    <source>
        <dbReference type="SAM" id="MobiDB-lite"/>
    </source>
</evidence>
<name>DER_CERS1</name>
<organism>
    <name type="scientific">Cereibacter sphaeroides (strain ATCC 17029 / ATH 2.4.9)</name>
    <name type="common">Rhodobacter sphaeroides</name>
    <dbReference type="NCBI Taxonomy" id="349101"/>
    <lineage>
        <taxon>Bacteria</taxon>
        <taxon>Pseudomonadati</taxon>
        <taxon>Pseudomonadota</taxon>
        <taxon>Alphaproteobacteria</taxon>
        <taxon>Rhodobacterales</taxon>
        <taxon>Paracoccaceae</taxon>
        <taxon>Cereibacter</taxon>
    </lineage>
</organism>
<comment type="function">
    <text evidence="1">GTPase that plays an essential role in the late steps of ribosome biogenesis.</text>
</comment>
<comment type="subunit">
    <text evidence="1">Associates with the 50S ribosomal subunit.</text>
</comment>
<comment type="similarity">
    <text evidence="1">Belongs to the TRAFAC class TrmE-Era-EngA-EngB-Septin-like GTPase superfamily. EngA (Der) GTPase family.</text>
</comment>
<reference key="1">
    <citation type="submission" date="2007-02" db="EMBL/GenBank/DDBJ databases">
        <title>Complete sequence of chromosome 1 of Rhodobacter sphaeroides ATCC 17029.</title>
        <authorList>
            <person name="Copeland A."/>
            <person name="Lucas S."/>
            <person name="Lapidus A."/>
            <person name="Barry K."/>
            <person name="Detter J.C."/>
            <person name="Glavina del Rio T."/>
            <person name="Hammon N."/>
            <person name="Israni S."/>
            <person name="Dalin E."/>
            <person name="Tice H."/>
            <person name="Pitluck S."/>
            <person name="Kiss H."/>
            <person name="Brettin T."/>
            <person name="Bruce D."/>
            <person name="Han C."/>
            <person name="Tapia R."/>
            <person name="Gilna P."/>
            <person name="Schmutz J."/>
            <person name="Larimer F."/>
            <person name="Land M."/>
            <person name="Hauser L."/>
            <person name="Kyrpides N."/>
            <person name="Mikhailova N."/>
            <person name="Richardson P."/>
            <person name="Mackenzie C."/>
            <person name="Choudhary M."/>
            <person name="Donohue T.J."/>
            <person name="Kaplan S."/>
        </authorList>
    </citation>
    <scope>NUCLEOTIDE SEQUENCE [LARGE SCALE GENOMIC DNA]</scope>
    <source>
        <strain>ATCC 17029 / ATH 2.4.9</strain>
    </source>
</reference>
<feature type="chain" id="PRO_1000011720" description="GTPase Der">
    <location>
        <begin position="1"/>
        <end position="487"/>
    </location>
</feature>
<feature type="domain" description="EngA-type G 1">
    <location>
        <begin position="3"/>
        <end position="167"/>
    </location>
</feature>
<feature type="domain" description="EngA-type G 2">
    <location>
        <begin position="203"/>
        <end position="378"/>
    </location>
</feature>
<feature type="domain" description="KH-like" evidence="1">
    <location>
        <begin position="379"/>
        <end position="463"/>
    </location>
</feature>
<feature type="region of interest" description="Disordered" evidence="2">
    <location>
        <begin position="451"/>
        <end position="487"/>
    </location>
</feature>
<feature type="compositionally biased region" description="Basic residues" evidence="2">
    <location>
        <begin position="471"/>
        <end position="487"/>
    </location>
</feature>
<feature type="binding site" evidence="1">
    <location>
        <begin position="9"/>
        <end position="16"/>
    </location>
    <ligand>
        <name>GTP</name>
        <dbReference type="ChEBI" id="CHEBI:37565"/>
        <label>1</label>
    </ligand>
</feature>
<feature type="binding site" evidence="1">
    <location>
        <begin position="56"/>
        <end position="60"/>
    </location>
    <ligand>
        <name>GTP</name>
        <dbReference type="ChEBI" id="CHEBI:37565"/>
        <label>1</label>
    </ligand>
</feature>
<feature type="binding site" evidence="1">
    <location>
        <begin position="119"/>
        <end position="122"/>
    </location>
    <ligand>
        <name>GTP</name>
        <dbReference type="ChEBI" id="CHEBI:37565"/>
        <label>1</label>
    </ligand>
</feature>
<feature type="binding site" evidence="1">
    <location>
        <begin position="209"/>
        <end position="216"/>
    </location>
    <ligand>
        <name>GTP</name>
        <dbReference type="ChEBI" id="CHEBI:37565"/>
        <label>2</label>
    </ligand>
</feature>
<feature type="binding site" evidence="1">
    <location>
        <begin position="256"/>
        <end position="260"/>
    </location>
    <ligand>
        <name>GTP</name>
        <dbReference type="ChEBI" id="CHEBI:37565"/>
        <label>2</label>
    </ligand>
</feature>
<feature type="binding site" evidence="1">
    <location>
        <begin position="321"/>
        <end position="324"/>
    </location>
    <ligand>
        <name>GTP</name>
        <dbReference type="ChEBI" id="CHEBI:37565"/>
        <label>2</label>
    </ligand>
</feature>
<protein>
    <recommendedName>
        <fullName evidence="1">GTPase Der</fullName>
    </recommendedName>
    <alternativeName>
        <fullName evidence="1">GTP-binding protein EngA</fullName>
    </alternativeName>
</protein>
<proteinExistence type="inferred from homology"/>
<dbReference type="EMBL" id="CP000577">
    <property type="protein sequence ID" value="ABN76466.1"/>
    <property type="molecule type" value="Genomic_DNA"/>
</dbReference>
<dbReference type="RefSeq" id="WP_002719849.1">
    <property type="nucleotide sequence ID" value="NC_009049.1"/>
</dbReference>
<dbReference type="SMR" id="A3PJF0"/>
<dbReference type="GeneID" id="67446448"/>
<dbReference type="KEGG" id="rsh:Rsph17029_1356"/>
<dbReference type="HOGENOM" id="CLU_016077_5_0_5"/>
<dbReference type="GO" id="GO:0005525">
    <property type="term" value="F:GTP binding"/>
    <property type="evidence" value="ECO:0007669"/>
    <property type="project" value="UniProtKB-UniRule"/>
</dbReference>
<dbReference type="GO" id="GO:0042254">
    <property type="term" value="P:ribosome biogenesis"/>
    <property type="evidence" value="ECO:0007669"/>
    <property type="project" value="UniProtKB-KW"/>
</dbReference>
<dbReference type="CDD" id="cd01894">
    <property type="entry name" value="EngA1"/>
    <property type="match status" value="1"/>
</dbReference>
<dbReference type="CDD" id="cd01895">
    <property type="entry name" value="EngA2"/>
    <property type="match status" value="1"/>
</dbReference>
<dbReference type="FunFam" id="3.30.300.20:FF:000004">
    <property type="entry name" value="GTPase Der"/>
    <property type="match status" value="1"/>
</dbReference>
<dbReference type="Gene3D" id="3.30.300.20">
    <property type="match status" value="1"/>
</dbReference>
<dbReference type="Gene3D" id="3.40.50.300">
    <property type="entry name" value="P-loop containing nucleotide triphosphate hydrolases"/>
    <property type="match status" value="2"/>
</dbReference>
<dbReference type="HAMAP" id="MF_00195">
    <property type="entry name" value="GTPase_Der"/>
    <property type="match status" value="1"/>
</dbReference>
<dbReference type="InterPro" id="IPR031166">
    <property type="entry name" value="G_ENGA"/>
</dbReference>
<dbReference type="InterPro" id="IPR006073">
    <property type="entry name" value="GTP-bd"/>
</dbReference>
<dbReference type="InterPro" id="IPR016484">
    <property type="entry name" value="GTPase_Der"/>
</dbReference>
<dbReference type="InterPro" id="IPR032859">
    <property type="entry name" value="KH_dom-like"/>
</dbReference>
<dbReference type="InterPro" id="IPR015946">
    <property type="entry name" value="KH_dom-like_a/b"/>
</dbReference>
<dbReference type="InterPro" id="IPR027417">
    <property type="entry name" value="P-loop_NTPase"/>
</dbReference>
<dbReference type="InterPro" id="IPR005225">
    <property type="entry name" value="Small_GTP-bd"/>
</dbReference>
<dbReference type="NCBIfam" id="TIGR03594">
    <property type="entry name" value="GTPase_EngA"/>
    <property type="match status" value="1"/>
</dbReference>
<dbReference type="NCBIfam" id="TIGR00231">
    <property type="entry name" value="small_GTP"/>
    <property type="match status" value="2"/>
</dbReference>
<dbReference type="PANTHER" id="PTHR43834">
    <property type="entry name" value="GTPASE DER"/>
    <property type="match status" value="1"/>
</dbReference>
<dbReference type="PANTHER" id="PTHR43834:SF6">
    <property type="entry name" value="GTPASE DER"/>
    <property type="match status" value="1"/>
</dbReference>
<dbReference type="Pfam" id="PF14714">
    <property type="entry name" value="KH_dom-like"/>
    <property type="match status" value="1"/>
</dbReference>
<dbReference type="Pfam" id="PF01926">
    <property type="entry name" value="MMR_HSR1"/>
    <property type="match status" value="2"/>
</dbReference>
<dbReference type="PIRSF" id="PIRSF006485">
    <property type="entry name" value="GTP-binding_EngA"/>
    <property type="match status" value="1"/>
</dbReference>
<dbReference type="PRINTS" id="PR00326">
    <property type="entry name" value="GTP1OBG"/>
</dbReference>
<dbReference type="SUPFAM" id="SSF52540">
    <property type="entry name" value="P-loop containing nucleoside triphosphate hydrolases"/>
    <property type="match status" value="2"/>
</dbReference>
<dbReference type="PROSITE" id="PS51712">
    <property type="entry name" value="G_ENGA"/>
    <property type="match status" value="2"/>
</dbReference>
<accession>A3PJF0</accession>
<sequence length="487" mass="54121">MSFTLAIVGRPNVGKSTLFNRLVGKRLALVDDQPGVTRDLREGDARLIDLRFTVIDTAGLEEVTDDSLQGRMRRLTERAVEMADVCLFLIDGRVGVTPSDEVFADILRRKNAHVILGVNKAEGRAGDGGAIEAWSLGLGEPIRLSAEHGEGMDDLYHILRPIAEGFAERAAADAPVVDVDVPEEEADLEADPEAHKPTVKHPLQIAVIGRPNAGKSTLINKIIGEDRLLTGPEAGITRDAISVRSEWHGTPIRIFDTAGMRKKARISDKLEKLSVADGLRAVRFAEVVVVLLDVEIPFEQQDLRIADFAETEGRAVVVAVNKWDLEGEKQEKLAELKEMFERLLPQLRGAPLVTVSAKTGRGLDRLHAAILRAHDIWNRRITTARLNTWLGAMVEAHPPPAPGGRRIKLRYMTQVKTRPPGFVVMCSHPDEMPDSYRRYLVNGLRDHFDMPGTPIRLTMRGQGDKNPFKERKFRTPSRLRKHLGKKD</sequence>
<keyword id="KW-0342">GTP-binding</keyword>
<keyword id="KW-0547">Nucleotide-binding</keyword>
<keyword id="KW-0677">Repeat</keyword>
<keyword id="KW-0690">Ribosome biogenesis</keyword>